<keyword id="KW-0997">Cell inner membrane</keyword>
<keyword id="KW-1003">Cell membrane</keyword>
<keyword id="KW-0406">Ion transport</keyword>
<keyword id="KW-0472">Membrane</keyword>
<keyword id="KW-0520">NAD</keyword>
<keyword id="KW-0915">Sodium</keyword>
<keyword id="KW-0739">Sodium transport</keyword>
<keyword id="KW-1278">Translocase</keyword>
<keyword id="KW-0812">Transmembrane</keyword>
<keyword id="KW-1133">Transmembrane helix</keyword>
<keyword id="KW-0813">Transport</keyword>
<keyword id="KW-0830">Ubiquinone</keyword>
<protein>
    <recommendedName>
        <fullName evidence="1">Na(+)-translocating NADH-quinone reductase subunit D</fullName>
        <shortName evidence="1">Na(+)-NQR subunit D</shortName>
        <shortName evidence="1">Na(+)-translocating NQR subunit D</shortName>
        <ecNumber evidence="1">7.2.1.1</ecNumber>
    </recommendedName>
    <alternativeName>
        <fullName evidence="1">NQR complex subunit D</fullName>
    </alternativeName>
    <alternativeName>
        <fullName evidence="1">NQR-1 subunit D</fullName>
    </alternativeName>
</protein>
<organism>
    <name type="scientific">Chlamydia abortus (strain DSM 27085 / S26/3)</name>
    <name type="common">Chlamydophila abortus</name>
    <dbReference type="NCBI Taxonomy" id="218497"/>
    <lineage>
        <taxon>Bacteria</taxon>
        <taxon>Pseudomonadati</taxon>
        <taxon>Chlamydiota</taxon>
        <taxon>Chlamydiia</taxon>
        <taxon>Chlamydiales</taxon>
        <taxon>Chlamydiaceae</taxon>
        <taxon>Chlamydia/Chlamydophila group</taxon>
        <taxon>Chlamydia</taxon>
    </lineage>
</organism>
<gene>
    <name evidence="1" type="primary">nqrD</name>
    <name type="ordered locus">CAB353</name>
</gene>
<accession>Q5L6C2</accession>
<feature type="chain" id="PRO_1000060149" description="Na(+)-translocating NADH-quinone reductase subunit D">
    <location>
        <begin position="1"/>
        <end position="213"/>
    </location>
</feature>
<feature type="transmembrane region" description="Helical" evidence="1">
    <location>
        <begin position="21"/>
        <end position="41"/>
    </location>
</feature>
<feature type="transmembrane region" description="Helical" evidence="1">
    <location>
        <begin position="42"/>
        <end position="62"/>
    </location>
</feature>
<feature type="transmembrane region" description="Helical" evidence="1">
    <location>
        <begin position="77"/>
        <end position="97"/>
    </location>
</feature>
<feature type="transmembrane region" description="Helical" evidence="1">
    <location>
        <begin position="101"/>
        <end position="121"/>
    </location>
</feature>
<feature type="transmembrane region" description="Helical" evidence="1">
    <location>
        <begin position="131"/>
        <end position="151"/>
    </location>
</feature>
<feature type="transmembrane region" description="Helical" evidence="1">
    <location>
        <begin position="153"/>
        <end position="173"/>
    </location>
</feature>
<feature type="transmembrane region" description="Helical" evidence="1">
    <location>
        <begin position="183"/>
        <end position="203"/>
    </location>
</feature>
<dbReference type="EC" id="7.2.1.1" evidence="1"/>
<dbReference type="EMBL" id="CR848038">
    <property type="protein sequence ID" value="CAH63804.1"/>
    <property type="molecule type" value="Genomic_DNA"/>
</dbReference>
<dbReference type="RefSeq" id="WP_011097010.1">
    <property type="nucleotide sequence ID" value="NC_004552.2"/>
</dbReference>
<dbReference type="SMR" id="Q5L6C2"/>
<dbReference type="GeneID" id="93024909"/>
<dbReference type="KEGG" id="cab:CAB353"/>
<dbReference type="eggNOG" id="COG1347">
    <property type="taxonomic scope" value="Bacteria"/>
</dbReference>
<dbReference type="HOGENOM" id="CLU_046659_1_1_0"/>
<dbReference type="OrthoDB" id="9790976at2"/>
<dbReference type="Proteomes" id="UP000001012">
    <property type="component" value="Chromosome"/>
</dbReference>
<dbReference type="GO" id="GO:0005886">
    <property type="term" value="C:plasma membrane"/>
    <property type="evidence" value="ECO:0007669"/>
    <property type="project" value="UniProtKB-SubCell"/>
</dbReference>
<dbReference type="GO" id="GO:0016655">
    <property type="term" value="F:oxidoreductase activity, acting on NAD(P)H, quinone or similar compound as acceptor"/>
    <property type="evidence" value="ECO:0007669"/>
    <property type="project" value="UniProtKB-UniRule"/>
</dbReference>
<dbReference type="GO" id="GO:0006814">
    <property type="term" value="P:sodium ion transport"/>
    <property type="evidence" value="ECO:0007669"/>
    <property type="project" value="UniProtKB-UniRule"/>
</dbReference>
<dbReference type="HAMAP" id="MF_00428">
    <property type="entry name" value="NqrD"/>
    <property type="match status" value="1"/>
</dbReference>
<dbReference type="InterPro" id="IPR011292">
    <property type="entry name" value="NqrD"/>
</dbReference>
<dbReference type="InterPro" id="IPR003667">
    <property type="entry name" value="NqrDE/RnfAE"/>
</dbReference>
<dbReference type="NCBIfam" id="TIGR01939">
    <property type="entry name" value="nqrD"/>
    <property type="match status" value="1"/>
</dbReference>
<dbReference type="NCBIfam" id="NF006777">
    <property type="entry name" value="PRK09292.1"/>
    <property type="match status" value="1"/>
</dbReference>
<dbReference type="NCBIfam" id="NF009070">
    <property type="entry name" value="PRK12405.1"/>
    <property type="match status" value="1"/>
</dbReference>
<dbReference type="PANTHER" id="PTHR30586">
    <property type="entry name" value="ELECTRON TRANSPORT COMPLEX PROTEIN RNFE"/>
    <property type="match status" value="1"/>
</dbReference>
<dbReference type="PANTHER" id="PTHR30586:SF1">
    <property type="entry name" value="NA(+)-TRANSLOCATING NADH-QUINONE REDUCTASE SUBUNIT D"/>
    <property type="match status" value="1"/>
</dbReference>
<dbReference type="Pfam" id="PF02508">
    <property type="entry name" value="Rnf-Nqr"/>
    <property type="match status" value="1"/>
</dbReference>
<dbReference type="PIRSF" id="PIRSF006102">
    <property type="entry name" value="NQR_DE"/>
    <property type="match status" value="1"/>
</dbReference>
<reference key="1">
    <citation type="journal article" date="2005" name="Genome Res.">
        <title>The Chlamydophila abortus genome sequence reveals an array of variable proteins that contribute to interspecies variation.</title>
        <authorList>
            <person name="Thomson N.R."/>
            <person name="Yeats C."/>
            <person name="Bell K."/>
            <person name="Holden M.T.G."/>
            <person name="Bentley S.D."/>
            <person name="Livingstone M."/>
            <person name="Cerdeno-Tarraga A.-M."/>
            <person name="Harris B."/>
            <person name="Doggett J."/>
            <person name="Ormond D."/>
            <person name="Mungall K."/>
            <person name="Clarke K."/>
            <person name="Feltwell T."/>
            <person name="Hance Z."/>
            <person name="Sanders M."/>
            <person name="Quail M.A."/>
            <person name="Price C."/>
            <person name="Barrell B.G."/>
            <person name="Parkhill J."/>
            <person name="Longbottom D."/>
        </authorList>
    </citation>
    <scope>NUCLEOTIDE SEQUENCE [LARGE SCALE GENOMIC DNA]</scope>
    <source>
        <strain>DSM 27085 / S26/3</strain>
    </source>
</reference>
<evidence type="ECO:0000255" key="1">
    <source>
        <dbReference type="HAMAP-Rule" id="MF_00428"/>
    </source>
</evidence>
<name>NQRD_CHLAB</name>
<sequence length="213" mass="23397">MAANKSYKSYFLDPLWNNNQPLIAILGICSALAVTTTVNTALTMGLAVSFVTGCSSFFVSLLRKVTPDSVRMITQLIIISLFVIVIDQFLKAFFFDISKTLSVFVGLIITNCIVMGRAESLARNVPPIPAFLDGFASGLGYGWVLVTVSIIREFFGFGTILGLQLIPKCFYASEAHPDGYENFGLMVLAPSAFFLLGIMIWGVNILRSKKERR</sequence>
<proteinExistence type="inferred from homology"/>
<comment type="function">
    <text evidence="1">NQR complex catalyzes the reduction of ubiquinone-1 to ubiquinol by two successive reactions, coupled with the transport of Na(+) ions from the cytoplasm to the periplasm. NqrA to NqrE are probably involved in the second step, the conversion of ubisemiquinone to ubiquinol.</text>
</comment>
<comment type="catalytic activity">
    <reaction evidence="1">
        <text>a ubiquinone + n Na(+)(in) + NADH + H(+) = a ubiquinol + n Na(+)(out) + NAD(+)</text>
        <dbReference type="Rhea" id="RHEA:47748"/>
        <dbReference type="Rhea" id="RHEA-COMP:9565"/>
        <dbReference type="Rhea" id="RHEA-COMP:9566"/>
        <dbReference type="ChEBI" id="CHEBI:15378"/>
        <dbReference type="ChEBI" id="CHEBI:16389"/>
        <dbReference type="ChEBI" id="CHEBI:17976"/>
        <dbReference type="ChEBI" id="CHEBI:29101"/>
        <dbReference type="ChEBI" id="CHEBI:57540"/>
        <dbReference type="ChEBI" id="CHEBI:57945"/>
        <dbReference type="EC" id="7.2.1.1"/>
    </reaction>
</comment>
<comment type="subunit">
    <text evidence="1">Composed of six subunits; NqrA, NqrB, NqrC, NqrD, NqrE and NqrF.</text>
</comment>
<comment type="subcellular location">
    <subcellularLocation>
        <location evidence="1">Cell inner membrane</location>
        <topology evidence="1">Multi-pass membrane protein</topology>
    </subcellularLocation>
</comment>
<comment type="similarity">
    <text evidence="1">Belongs to the NqrDE/RnfAE family.</text>
</comment>